<accession>A8G9H8</accession>
<organism>
    <name type="scientific">Serratia proteamaculans (strain 568)</name>
    <dbReference type="NCBI Taxonomy" id="399741"/>
    <lineage>
        <taxon>Bacteria</taxon>
        <taxon>Pseudomonadati</taxon>
        <taxon>Pseudomonadota</taxon>
        <taxon>Gammaproteobacteria</taxon>
        <taxon>Enterobacterales</taxon>
        <taxon>Yersiniaceae</taxon>
        <taxon>Serratia</taxon>
    </lineage>
</organism>
<protein>
    <recommendedName>
        <fullName evidence="1">Phosphopentomutase</fullName>
        <ecNumber evidence="1">5.4.2.7</ecNumber>
    </recommendedName>
    <alternativeName>
        <fullName evidence="1">Phosphodeoxyribomutase</fullName>
    </alternativeName>
</protein>
<evidence type="ECO:0000255" key="1">
    <source>
        <dbReference type="HAMAP-Rule" id="MF_00740"/>
    </source>
</evidence>
<comment type="function">
    <text evidence="1">Isomerase that catalyzes the conversion of deoxy-ribose 1-phosphate (dRib-1-P) and ribose 1-phosphate (Rib-1-P) to deoxy-ribose 5-phosphate (dRib-5-P) and ribose 5-phosphate (Rib-5-P), respectively.</text>
</comment>
<comment type="catalytic activity">
    <reaction evidence="1">
        <text>2-deoxy-alpha-D-ribose 1-phosphate = 2-deoxy-D-ribose 5-phosphate</text>
        <dbReference type="Rhea" id="RHEA:27658"/>
        <dbReference type="ChEBI" id="CHEBI:57259"/>
        <dbReference type="ChEBI" id="CHEBI:62877"/>
        <dbReference type="EC" id="5.4.2.7"/>
    </reaction>
</comment>
<comment type="catalytic activity">
    <reaction evidence="1">
        <text>alpha-D-ribose 1-phosphate = D-ribose 5-phosphate</text>
        <dbReference type="Rhea" id="RHEA:18793"/>
        <dbReference type="ChEBI" id="CHEBI:57720"/>
        <dbReference type="ChEBI" id="CHEBI:78346"/>
        <dbReference type="EC" id="5.4.2.7"/>
    </reaction>
</comment>
<comment type="cofactor">
    <cofactor evidence="1">
        <name>Mn(2+)</name>
        <dbReference type="ChEBI" id="CHEBI:29035"/>
    </cofactor>
    <text evidence="1">Binds 2 manganese ions.</text>
</comment>
<comment type="pathway">
    <text evidence="1">Carbohydrate degradation; 2-deoxy-D-ribose 1-phosphate degradation; D-glyceraldehyde 3-phosphate and acetaldehyde from 2-deoxy-alpha-D-ribose 1-phosphate: step 1/2.</text>
</comment>
<comment type="subcellular location">
    <subcellularLocation>
        <location evidence="1">Cytoplasm</location>
    </subcellularLocation>
</comment>
<comment type="similarity">
    <text evidence="1">Belongs to the phosphopentomutase family.</text>
</comment>
<feature type="chain" id="PRO_1000062152" description="Phosphopentomutase">
    <location>
        <begin position="1"/>
        <end position="407"/>
    </location>
</feature>
<feature type="binding site" evidence="1">
    <location>
        <position position="10"/>
    </location>
    <ligand>
        <name>Mn(2+)</name>
        <dbReference type="ChEBI" id="CHEBI:29035"/>
        <label>1</label>
    </ligand>
</feature>
<feature type="binding site" evidence="1">
    <location>
        <position position="306"/>
    </location>
    <ligand>
        <name>Mn(2+)</name>
        <dbReference type="ChEBI" id="CHEBI:29035"/>
        <label>2</label>
    </ligand>
</feature>
<feature type="binding site" evidence="1">
    <location>
        <position position="311"/>
    </location>
    <ligand>
        <name>Mn(2+)</name>
        <dbReference type="ChEBI" id="CHEBI:29035"/>
        <label>2</label>
    </ligand>
</feature>
<feature type="binding site" evidence="1">
    <location>
        <position position="347"/>
    </location>
    <ligand>
        <name>Mn(2+)</name>
        <dbReference type="ChEBI" id="CHEBI:29035"/>
        <label>1</label>
    </ligand>
</feature>
<feature type="binding site" evidence="1">
    <location>
        <position position="348"/>
    </location>
    <ligand>
        <name>Mn(2+)</name>
        <dbReference type="ChEBI" id="CHEBI:29035"/>
        <label>1</label>
    </ligand>
</feature>
<feature type="binding site" evidence="1">
    <location>
        <position position="359"/>
    </location>
    <ligand>
        <name>Mn(2+)</name>
        <dbReference type="ChEBI" id="CHEBI:29035"/>
        <label>2</label>
    </ligand>
</feature>
<proteinExistence type="inferred from homology"/>
<name>DEOB_SERP5</name>
<keyword id="KW-0963">Cytoplasm</keyword>
<keyword id="KW-0413">Isomerase</keyword>
<keyword id="KW-0464">Manganese</keyword>
<keyword id="KW-0479">Metal-binding</keyword>
<sequence length="407" mass="44273">MKRTFIMVLDSFGIGASEDAAKFGDQGSDTLGHIAEVCARGEANVGRQGPLTLPNLSRLGLGKAAEESTGTFPQGLDRNADIIGAYAHASELSSGKDTPSGHWEIAGVPVLFDWGYFSDEHNSFPQELLDKLVERANLPGYLGNCHSSGTVILDQLGEEHMKTGKPIFYTSADSVFQIACHEETFGLDRLYELCEIAREELTEGGYNIGRVIARPFLGDKPGNFQRTGNRHDLAVEPPAPTVLKKLVDEKGGEVVSIGKIADIYANVGITKKVKATGIDALFDATLIEMEKAGDNTIVFTNFVDFDSSYGHRRDVAGYAAALELFDRRLPELLKLVKDEDIIIFTADHGCDPTWPGTDHTREHIPVLVYGPKVKPGSLGHRETFADIGQTVASYFGVSPMDYGKSMF</sequence>
<gene>
    <name evidence="1" type="primary">deoB</name>
    <name type="ordered locus">Spro_0662</name>
</gene>
<dbReference type="EC" id="5.4.2.7" evidence="1"/>
<dbReference type="EMBL" id="CP000826">
    <property type="protein sequence ID" value="ABV39768.1"/>
    <property type="molecule type" value="Genomic_DNA"/>
</dbReference>
<dbReference type="SMR" id="A8G9H8"/>
<dbReference type="STRING" id="399741.Spro_0662"/>
<dbReference type="KEGG" id="spe:Spro_0662"/>
<dbReference type="eggNOG" id="COG1015">
    <property type="taxonomic scope" value="Bacteria"/>
</dbReference>
<dbReference type="HOGENOM" id="CLU_053861_0_0_6"/>
<dbReference type="OrthoDB" id="9769930at2"/>
<dbReference type="UniPathway" id="UPA00002">
    <property type="reaction ID" value="UER00467"/>
</dbReference>
<dbReference type="GO" id="GO:0005829">
    <property type="term" value="C:cytosol"/>
    <property type="evidence" value="ECO:0007669"/>
    <property type="project" value="TreeGrafter"/>
</dbReference>
<dbReference type="GO" id="GO:0000287">
    <property type="term" value="F:magnesium ion binding"/>
    <property type="evidence" value="ECO:0007669"/>
    <property type="project" value="InterPro"/>
</dbReference>
<dbReference type="GO" id="GO:0030145">
    <property type="term" value="F:manganese ion binding"/>
    <property type="evidence" value="ECO:0007669"/>
    <property type="project" value="UniProtKB-UniRule"/>
</dbReference>
<dbReference type="GO" id="GO:0008973">
    <property type="term" value="F:phosphopentomutase activity"/>
    <property type="evidence" value="ECO:0007669"/>
    <property type="project" value="UniProtKB-UniRule"/>
</dbReference>
<dbReference type="GO" id="GO:0006018">
    <property type="term" value="P:2-deoxyribose 1-phosphate catabolic process"/>
    <property type="evidence" value="ECO:0007669"/>
    <property type="project" value="UniProtKB-UniRule"/>
</dbReference>
<dbReference type="GO" id="GO:0006015">
    <property type="term" value="P:5-phosphoribose 1-diphosphate biosynthetic process"/>
    <property type="evidence" value="ECO:0007669"/>
    <property type="project" value="UniProtKB-UniPathway"/>
</dbReference>
<dbReference type="GO" id="GO:0043094">
    <property type="term" value="P:metabolic compound salvage"/>
    <property type="evidence" value="ECO:0007669"/>
    <property type="project" value="InterPro"/>
</dbReference>
<dbReference type="GO" id="GO:0009117">
    <property type="term" value="P:nucleotide metabolic process"/>
    <property type="evidence" value="ECO:0007669"/>
    <property type="project" value="InterPro"/>
</dbReference>
<dbReference type="CDD" id="cd16009">
    <property type="entry name" value="PPM"/>
    <property type="match status" value="1"/>
</dbReference>
<dbReference type="FunFam" id="3.30.70.1250:FF:000001">
    <property type="entry name" value="Phosphopentomutase"/>
    <property type="match status" value="1"/>
</dbReference>
<dbReference type="Gene3D" id="3.40.720.10">
    <property type="entry name" value="Alkaline Phosphatase, subunit A"/>
    <property type="match status" value="1"/>
</dbReference>
<dbReference type="Gene3D" id="3.30.70.1250">
    <property type="entry name" value="Phosphopentomutase"/>
    <property type="match status" value="1"/>
</dbReference>
<dbReference type="HAMAP" id="MF_00740">
    <property type="entry name" value="Phosphopentomut"/>
    <property type="match status" value="1"/>
</dbReference>
<dbReference type="InterPro" id="IPR017850">
    <property type="entry name" value="Alkaline_phosphatase_core_sf"/>
</dbReference>
<dbReference type="InterPro" id="IPR010045">
    <property type="entry name" value="DeoB"/>
</dbReference>
<dbReference type="InterPro" id="IPR006124">
    <property type="entry name" value="Metalloenzyme"/>
</dbReference>
<dbReference type="InterPro" id="IPR024052">
    <property type="entry name" value="Phosphopentomutase_DeoB_cap_sf"/>
</dbReference>
<dbReference type="NCBIfam" id="TIGR01696">
    <property type="entry name" value="deoB"/>
    <property type="match status" value="1"/>
</dbReference>
<dbReference type="NCBIfam" id="NF003766">
    <property type="entry name" value="PRK05362.1"/>
    <property type="match status" value="1"/>
</dbReference>
<dbReference type="PANTHER" id="PTHR21110">
    <property type="entry name" value="PHOSPHOPENTOMUTASE"/>
    <property type="match status" value="1"/>
</dbReference>
<dbReference type="PANTHER" id="PTHR21110:SF0">
    <property type="entry name" value="PHOSPHOPENTOMUTASE"/>
    <property type="match status" value="1"/>
</dbReference>
<dbReference type="Pfam" id="PF01676">
    <property type="entry name" value="Metalloenzyme"/>
    <property type="match status" value="1"/>
</dbReference>
<dbReference type="PIRSF" id="PIRSF001491">
    <property type="entry name" value="Ppentomutase"/>
    <property type="match status" value="1"/>
</dbReference>
<dbReference type="SUPFAM" id="SSF53649">
    <property type="entry name" value="Alkaline phosphatase-like"/>
    <property type="match status" value="1"/>
</dbReference>
<dbReference type="SUPFAM" id="SSF143856">
    <property type="entry name" value="DeoB insert domain-like"/>
    <property type="match status" value="1"/>
</dbReference>
<reference key="1">
    <citation type="submission" date="2007-09" db="EMBL/GenBank/DDBJ databases">
        <title>Complete sequence of chromosome of Serratia proteamaculans 568.</title>
        <authorList>
            <consortium name="US DOE Joint Genome Institute"/>
            <person name="Copeland A."/>
            <person name="Lucas S."/>
            <person name="Lapidus A."/>
            <person name="Barry K."/>
            <person name="Glavina del Rio T."/>
            <person name="Dalin E."/>
            <person name="Tice H."/>
            <person name="Pitluck S."/>
            <person name="Chain P."/>
            <person name="Malfatti S."/>
            <person name="Shin M."/>
            <person name="Vergez L."/>
            <person name="Schmutz J."/>
            <person name="Larimer F."/>
            <person name="Land M."/>
            <person name="Hauser L."/>
            <person name="Kyrpides N."/>
            <person name="Kim E."/>
            <person name="Taghavi S."/>
            <person name="Newman L."/>
            <person name="Vangronsveld J."/>
            <person name="van der Lelie D."/>
            <person name="Richardson P."/>
        </authorList>
    </citation>
    <scope>NUCLEOTIDE SEQUENCE [LARGE SCALE GENOMIC DNA]</scope>
    <source>
        <strain>568</strain>
    </source>
</reference>